<organism>
    <name type="scientific">Homo sapiens</name>
    <name type="common">Human</name>
    <dbReference type="NCBI Taxonomy" id="9606"/>
    <lineage>
        <taxon>Eukaryota</taxon>
        <taxon>Metazoa</taxon>
        <taxon>Chordata</taxon>
        <taxon>Craniata</taxon>
        <taxon>Vertebrata</taxon>
        <taxon>Euteleostomi</taxon>
        <taxon>Mammalia</taxon>
        <taxon>Eutheria</taxon>
        <taxon>Euarchontoglires</taxon>
        <taxon>Primates</taxon>
        <taxon>Haplorrhini</taxon>
        <taxon>Catarrhini</taxon>
        <taxon>Hominidae</taxon>
        <taxon>Homo</taxon>
    </lineage>
</organism>
<sequence length="587" mass="65922">MAEKGDCIASVYGYDLGGRFVDFQPLGFGVNGLVLSAVDSRACRKVAVKKIALSDARSMKHALREIKIIRRLDHDNIVKVYEVLGPKGTDLQGELFKFSVAYIVQEYMETDLARLLEQGTLAEEHAKLFMYQLLRGLKYIHSANVLHRDLKPANIFISTEDLVLKIGDFGLARIVDQHYSHKGYLSEGLVTKWYRSPRLLLSPNNYTKAIDMWAAGCILAEMLTGRMLFAGAHELEQMQLILETIPVIREEDKDELLRVMPSFVSSTWEVKRPLRKLLPEVNSEAIDFLEKILTFNPMDRLTAEMGLQHPYMSPYSCPEDEPTSQHPFRIEDEIDDIVLMAANQSQLSNWDTCSSRYPVSLSSDLEWRPDRCQDASEVQRDPRAGSAPLAEDVQVDPRKDSHSSSERFLEQSHSSMERAFEADYGRSCDYKVGSPSYLDKLLWRDNKPHHYSEPKLILDLSHWKQAAGAPPTATGLADTGAREDEPASLFLEIAQWVKSTQGGPEHASPPADDPERRLSASPPGRPAPVDGGASPQFDLDVFISRALKLCTKPEDLPDNKLGDLNGACIPEHPGDLVQTEAFSKERW</sequence>
<comment type="function">
    <text evidence="1">Atypical MAPK protein. Phosphorylates microtubule-associated protein 2 (MAP2) and MAPKAPK5. The precise role of the complex formed with MAPKAPK5 is still unclear, but the complex follows a complex set of phosphorylation events: upon interaction with atypical MAPKAPK5, ERK4/MAPK4 is phosphorylated at Ser-186 and then mediates phosphorylation and activation of MAPKAPK5, which in turn phosphorylates ERK4/MAPK4. May promote entry in the cell cycle (By similarity).</text>
</comment>
<comment type="catalytic activity">
    <reaction>
        <text>L-seryl-[protein] + ATP = O-phospho-L-seryl-[protein] + ADP + H(+)</text>
        <dbReference type="Rhea" id="RHEA:17989"/>
        <dbReference type="Rhea" id="RHEA-COMP:9863"/>
        <dbReference type="Rhea" id="RHEA-COMP:11604"/>
        <dbReference type="ChEBI" id="CHEBI:15378"/>
        <dbReference type="ChEBI" id="CHEBI:29999"/>
        <dbReference type="ChEBI" id="CHEBI:30616"/>
        <dbReference type="ChEBI" id="CHEBI:83421"/>
        <dbReference type="ChEBI" id="CHEBI:456216"/>
        <dbReference type="EC" id="2.7.11.24"/>
    </reaction>
</comment>
<comment type="catalytic activity">
    <reaction>
        <text>L-threonyl-[protein] + ATP = O-phospho-L-threonyl-[protein] + ADP + H(+)</text>
        <dbReference type="Rhea" id="RHEA:46608"/>
        <dbReference type="Rhea" id="RHEA-COMP:11060"/>
        <dbReference type="Rhea" id="RHEA-COMP:11605"/>
        <dbReference type="ChEBI" id="CHEBI:15378"/>
        <dbReference type="ChEBI" id="CHEBI:30013"/>
        <dbReference type="ChEBI" id="CHEBI:30616"/>
        <dbReference type="ChEBI" id="CHEBI:61977"/>
        <dbReference type="ChEBI" id="CHEBI:456216"/>
        <dbReference type="EC" id="2.7.11.24"/>
    </reaction>
</comment>
<comment type="cofactor">
    <cofactor evidence="1">
        <name>Mg(2+)</name>
        <dbReference type="ChEBI" id="CHEBI:18420"/>
    </cofactor>
</comment>
<comment type="activity regulation">
    <text>Activated by phosphorylation at Ser-186.</text>
</comment>
<comment type="subunit">
    <text evidence="1">Homodimer. Heterodimer with ERK3/MAPK6. Interacts with (via FRIEDE motif) MAPKAPK5 (By similarity).</text>
</comment>
<comment type="interaction">
    <interactant intactId="EBI-3906061">
        <id>P31152</id>
    </interactant>
    <interactant intactId="EBI-352572">
        <id>P08238</id>
        <label>HSP90AB1</label>
    </interactant>
    <organismsDiffer>false</organismsDiffer>
    <experiments>3</experiments>
</comment>
<comment type="interaction">
    <interactant intactId="EBI-3906061">
        <id>P31152</id>
    </interactant>
    <interactant intactId="EBI-356498">
        <id>P62258</id>
        <label>YWHAE</label>
    </interactant>
    <organismsDiffer>false</organismsDiffer>
    <experiments>2</experiments>
</comment>
<comment type="subcellular location">
    <subcellularLocation>
        <location evidence="1">Cytoplasm</location>
    </subcellularLocation>
    <subcellularLocation>
        <location evidence="1">Nucleus</location>
    </subcellularLocation>
    <text evidence="1">Translocates to the cytoplasm following interaction with MAPKAPK5.</text>
</comment>
<comment type="tissue specificity">
    <text>High expression in heart and brain.</text>
</comment>
<comment type="domain">
    <text evidence="1">The FRIEDE motif is required for docking MAPKAPK5.</text>
</comment>
<comment type="domain">
    <text>In contrast to classical MAPKs, the TXY motif within the activation loop is replaced by the SEG motif, whose phosphorylation activates the MAP kinases.</text>
</comment>
<comment type="PTM">
    <text evidence="7">Phosphorylated at Ser-186 by PAK1, PAK2 and PAK3 resulting in catalytic activation. Phosphorylated by MAPKAPK5 at other sites.</text>
</comment>
<comment type="similarity">
    <text evidence="8">Belongs to the protein kinase superfamily. CMGC Ser/Thr protein kinase family. MAP kinase subfamily.</text>
</comment>
<comment type="sequence caution" evidence="8">
    <conflict type="frameshift">
        <sequence resource="EMBL-CDS" id="CAA42411"/>
    </conflict>
</comment>
<comment type="online information" name="Atlas of Genetics and Cytogenetics in Oncology and Haematology">
    <link uri="https://atlasgeneticsoncology.org/gene/41293/MAPK4"/>
</comment>
<keyword id="KW-0067">ATP-binding</keyword>
<keyword id="KW-0131">Cell cycle</keyword>
<keyword id="KW-0963">Cytoplasm</keyword>
<keyword id="KW-0418">Kinase</keyword>
<keyword id="KW-0547">Nucleotide-binding</keyword>
<keyword id="KW-0539">Nucleus</keyword>
<keyword id="KW-0597">Phosphoprotein</keyword>
<keyword id="KW-1267">Proteomics identification</keyword>
<keyword id="KW-1185">Reference proteome</keyword>
<keyword id="KW-0723">Serine/threonine-protein kinase</keyword>
<keyword id="KW-0808">Transferase</keyword>
<evidence type="ECO:0000250" key="1"/>
<evidence type="ECO:0000255" key="2">
    <source>
        <dbReference type="PROSITE-ProRule" id="PRU00159"/>
    </source>
</evidence>
<evidence type="ECO:0000255" key="3">
    <source>
        <dbReference type="PROSITE-ProRule" id="PRU10027"/>
    </source>
</evidence>
<evidence type="ECO:0000256" key="4">
    <source>
        <dbReference type="SAM" id="MobiDB-lite"/>
    </source>
</evidence>
<evidence type="ECO:0000269" key="5">
    <source>
    </source>
</evidence>
<evidence type="ECO:0000269" key="6">
    <source>
    </source>
</evidence>
<evidence type="ECO:0000269" key="7">
    <source>
    </source>
</evidence>
<evidence type="ECO:0000305" key="8"/>
<evidence type="ECO:0007744" key="9">
    <source>
    </source>
</evidence>
<evidence type="ECO:0007744" key="10">
    <source>
    </source>
</evidence>
<accession>P31152</accession>
<accession>A1A4C4</accession>
<accession>Q0VG04</accession>
<proteinExistence type="evidence at protein level"/>
<reference key="1">
    <citation type="journal article" date="1992" name="FEBS Lett.">
        <title>Heterogeneous expression of four MAP kinase isoforms in human tissues.</title>
        <authorList>
            <person name="Gonzalez F.A."/>
            <person name="Raden D.L."/>
            <person name="Rigby M.R."/>
            <person name="Davis R.J."/>
        </authorList>
    </citation>
    <scope>NUCLEOTIDE SEQUENCE [MRNA]</scope>
</reference>
<reference key="2">
    <citation type="journal article" date="2004" name="Nat. Genet.">
        <title>Complete sequencing and characterization of 21,243 full-length human cDNAs.</title>
        <authorList>
            <person name="Ota T."/>
            <person name="Suzuki Y."/>
            <person name="Nishikawa T."/>
            <person name="Otsuki T."/>
            <person name="Sugiyama T."/>
            <person name="Irie R."/>
            <person name="Wakamatsu A."/>
            <person name="Hayashi K."/>
            <person name="Sato H."/>
            <person name="Nagai K."/>
            <person name="Kimura K."/>
            <person name="Makita H."/>
            <person name="Sekine M."/>
            <person name="Obayashi M."/>
            <person name="Nishi T."/>
            <person name="Shibahara T."/>
            <person name="Tanaka T."/>
            <person name="Ishii S."/>
            <person name="Yamamoto J."/>
            <person name="Saito K."/>
            <person name="Kawai Y."/>
            <person name="Isono Y."/>
            <person name="Nakamura Y."/>
            <person name="Nagahari K."/>
            <person name="Murakami K."/>
            <person name="Yasuda T."/>
            <person name="Iwayanagi T."/>
            <person name="Wagatsuma M."/>
            <person name="Shiratori A."/>
            <person name="Sudo H."/>
            <person name="Hosoiri T."/>
            <person name="Kaku Y."/>
            <person name="Kodaira H."/>
            <person name="Kondo H."/>
            <person name="Sugawara M."/>
            <person name="Takahashi M."/>
            <person name="Kanda K."/>
            <person name="Yokoi T."/>
            <person name="Furuya T."/>
            <person name="Kikkawa E."/>
            <person name="Omura Y."/>
            <person name="Abe K."/>
            <person name="Kamihara K."/>
            <person name="Katsuta N."/>
            <person name="Sato K."/>
            <person name="Tanikawa M."/>
            <person name="Yamazaki M."/>
            <person name="Ninomiya K."/>
            <person name="Ishibashi T."/>
            <person name="Yamashita H."/>
            <person name="Murakawa K."/>
            <person name="Fujimori K."/>
            <person name="Tanai H."/>
            <person name="Kimata M."/>
            <person name="Watanabe M."/>
            <person name="Hiraoka S."/>
            <person name="Chiba Y."/>
            <person name="Ishida S."/>
            <person name="Ono Y."/>
            <person name="Takiguchi S."/>
            <person name="Watanabe S."/>
            <person name="Yosida M."/>
            <person name="Hotuta T."/>
            <person name="Kusano J."/>
            <person name="Kanehori K."/>
            <person name="Takahashi-Fujii A."/>
            <person name="Hara H."/>
            <person name="Tanase T.-O."/>
            <person name="Nomura Y."/>
            <person name="Togiya S."/>
            <person name="Komai F."/>
            <person name="Hara R."/>
            <person name="Takeuchi K."/>
            <person name="Arita M."/>
            <person name="Imose N."/>
            <person name="Musashino K."/>
            <person name="Yuuki H."/>
            <person name="Oshima A."/>
            <person name="Sasaki N."/>
            <person name="Aotsuka S."/>
            <person name="Yoshikawa Y."/>
            <person name="Matsunawa H."/>
            <person name="Ichihara T."/>
            <person name="Shiohata N."/>
            <person name="Sano S."/>
            <person name="Moriya S."/>
            <person name="Momiyama H."/>
            <person name="Satoh N."/>
            <person name="Takami S."/>
            <person name="Terashima Y."/>
            <person name="Suzuki O."/>
            <person name="Nakagawa S."/>
            <person name="Senoh A."/>
            <person name="Mizoguchi H."/>
            <person name="Goto Y."/>
            <person name="Shimizu F."/>
            <person name="Wakebe H."/>
            <person name="Hishigaki H."/>
            <person name="Watanabe T."/>
            <person name="Sugiyama A."/>
            <person name="Takemoto M."/>
            <person name="Kawakami B."/>
            <person name="Yamazaki M."/>
            <person name="Watanabe K."/>
            <person name="Kumagai A."/>
            <person name="Itakura S."/>
            <person name="Fukuzumi Y."/>
            <person name="Fujimori Y."/>
            <person name="Komiyama M."/>
            <person name="Tashiro H."/>
            <person name="Tanigami A."/>
            <person name="Fujiwara T."/>
            <person name="Ono T."/>
            <person name="Yamada K."/>
            <person name="Fujii Y."/>
            <person name="Ozaki K."/>
            <person name="Hirao M."/>
            <person name="Ohmori Y."/>
            <person name="Kawabata A."/>
            <person name="Hikiji T."/>
            <person name="Kobatake N."/>
            <person name="Inagaki H."/>
            <person name="Ikema Y."/>
            <person name="Okamoto S."/>
            <person name="Okitani R."/>
            <person name="Kawakami T."/>
            <person name="Noguchi S."/>
            <person name="Itoh T."/>
            <person name="Shigeta K."/>
            <person name="Senba T."/>
            <person name="Matsumura K."/>
            <person name="Nakajima Y."/>
            <person name="Mizuno T."/>
            <person name="Morinaga M."/>
            <person name="Sasaki M."/>
            <person name="Togashi T."/>
            <person name="Oyama M."/>
            <person name="Hata H."/>
            <person name="Watanabe M."/>
            <person name="Komatsu T."/>
            <person name="Mizushima-Sugano J."/>
            <person name="Satoh T."/>
            <person name="Shirai Y."/>
            <person name="Takahashi Y."/>
            <person name="Nakagawa K."/>
            <person name="Okumura K."/>
            <person name="Nagase T."/>
            <person name="Nomura N."/>
            <person name="Kikuchi H."/>
            <person name="Masuho Y."/>
            <person name="Yamashita R."/>
            <person name="Nakai K."/>
            <person name="Yada T."/>
            <person name="Nakamura Y."/>
            <person name="Ohara O."/>
            <person name="Isogai T."/>
            <person name="Sugano S."/>
        </authorList>
    </citation>
    <scope>NUCLEOTIDE SEQUENCE [LARGE SCALE MRNA]</scope>
    <source>
        <tissue>Brain</tissue>
    </source>
</reference>
<reference key="3">
    <citation type="journal article" date="2005" name="Nature">
        <title>DNA sequence and analysis of human chromosome 18.</title>
        <authorList>
            <person name="Nusbaum C."/>
            <person name="Zody M.C."/>
            <person name="Borowsky M.L."/>
            <person name="Kamal M."/>
            <person name="Kodira C.D."/>
            <person name="Taylor T.D."/>
            <person name="Whittaker C.A."/>
            <person name="Chang J.L."/>
            <person name="Cuomo C.A."/>
            <person name="Dewar K."/>
            <person name="FitzGerald M.G."/>
            <person name="Yang X."/>
            <person name="Abouelleil A."/>
            <person name="Allen N.R."/>
            <person name="Anderson S."/>
            <person name="Bloom T."/>
            <person name="Bugalter B."/>
            <person name="Butler J."/>
            <person name="Cook A."/>
            <person name="DeCaprio D."/>
            <person name="Engels R."/>
            <person name="Garber M."/>
            <person name="Gnirke A."/>
            <person name="Hafez N."/>
            <person name="Hall J.L."/>
            <person name="Norman C.H."/>
            <person name="Itoh T."/>
            <person name="Jaffe D.B."/>
            <person name="Kuroki Y."/>
            <person name="Lehoczky J."/>
            <person name="Lui A."/>
            <person name="Macdonald P."/>
            <person name="Mauceli E."/>
            <person name="Mikkelsen T.S."/>
            <person name="Naylor J.W."/>
            <person name="Nicol R."/>
            <person name="Nguyen C."/>
            <person name="Noguchi H."/>
            <person name="O'Leary S.B."/>
            <person name="Piqani B."/>
            <person name="Smith C.L."/>
            <person name="Talamas J.A."/>
            <person name="Topham K."/>
            <person name="Totoki Y."/>
            <person name="Toyoda A."/>
            <person name="Wain H.M."/>
            <person name="Young S.K."/>
            <person name="Zeng Q."/>
            <person name="Zimmer A.R."/>
            <person name="Fujiyama A."/>
            <person name="Hattori M."/>
            <person name="Birren B.W."/>
            <person name="Sakaki Y."/>
            <person name="Lander E.S."/>
        </authorList>
    </citation>
    <scope>NUCLEOTIDE SEQUENCE [LARGE SCALE GENOMIC DNA]</scope>
</reference>
<reference key="4">
    <citation type="submission" date="2005-07" db="EMBL/GenBank/DDBJ databases">
        <authorList>
            <person name="Mural R.J."/>
            <person name="Istrail S."/>
            <person name="Sutton G."/>
            <person name="Florea L."/>
            <person name="Halpern A.L."/>
            <person name="Mobarry C.M."/>
            <person name="Lippert R."/>
            <person name="Walenz B."/>
            <person name="Shatkay H."/>
            <person name="Dew I."/>
            <person name="Miller J.R."/>
            <person name="Flanigan M.J."/>
            <person name="Edwards N.J."/>
            <person name="Bolanos R."/>
            <person name="Fasulo D."/>
            <person name="Halldorsson B.V."/>
            <person name="Hannenhalli S."/>
            <person name="Turner R."/>
            <person name="Yooseph S."/>
            <person name="Lu F."/>
            <person name="Nusskern D.R."/>
            <person name="Shue B.C."/>
            <person name="Zheng X.H."/>
            <person name="Zhong F."/>
            <person name="Delcher A.L."/>
            <person name="Huson D.H."/>
            <person name="Kravitz S.A."/>
            <person name="Mouchard L."/>
            <person name="Reinert K."/>
            <person name="Remington K.A."/>
            <person name="Clark A.G."/>
            <person name="Waterman M.S."/>
            <person name="Eichler E.E."/>
            <person name="Adams M.D."/>
            <person name="Hunkapiller M.W."/>
            <person name="Myers E.W."/>
            <person name="Venter J.C."/>
        </authorList>
    </citation>
    <scope>NUCLEOTIDE SEQUENCE [LARGE SCALE GENOMIC DNA]</scope>
</reference>
<reference key="5">
    <citation type="journal article" date="2004" name="Genome Res.">
        <title>The status, quality, and expansion of the NIH full-length cDNA project: the Mammalian Gene Collection (MGC).</title>
        <authorList>
            <consortium name="The MGC Project Team"/>
        </authorList>
    </citation>
    <scope>NUCLEOTIDE SEQUENCE [LARGE SCALE MRNA]</scope>
    <scope>VARIANT MET-38</scope>
    <source>
        <tissue>Brain</tissue>
        <tissue>Cerebellum</tissue>
    </source>
</reference>
<reference key="6">
    <citation type="journal article" date="2008" name="Proc. Natl. Acad. Sci. U.S.A.">
        <title>A quantitative atlas of mitotic phosphorylation.</title>
        <authorList>
            <person name="Dephoure N."/>
            <person name="Zhou C."/>
            <person name="Villen J."/>
            <person name="Beausoleil S.A."/>
            <person name="Bakalarski C.E."/>
            <person name="Elledge S.J."/>
            <person name="Gygi S.P."/>
        </authorList>
    </citation>
    <scope>PHOSPHORYLATION [LARGE SCALE ANALYSIS] AT SER-186</scope>
    <scope>IDENTIFICATION BY MASS SPECTROMETRY [LARGE SCALE ANALYSIS]</scope>
    <source>
        <tissue>Cervix carcinoma</tissue>
    </source>
</reference>
<reference key="7">
    <citation type="journal article" date="2011" name="J. Biol. Chem.">
        <title>Activation loop phosphorylation of ERK3/ERK4 by group I p21-activated kinases (PAKs) defines a novel PAK-ERK3/4-MAPK-activated protein kinase 5 signaling pathway.</title>
        <authorList>
            <person name="Deleris P."/>
            <person name="Trost M."/>
            <person name="Topisirovic I."/>
            <person name="Tanguay P.L."/>
            <person name="Borden K.L."/>
            <person name="Thibault P."/>
            <person name="Meloche S."/>
        </authorList>
    </citation>
    <scope>PHOSPHORYLATION AT SER-186</scope>
</reference>
<reference key="8">
    <citation type="journal article" date="2013" name="J. Proteome Res.">
        <title>Toward a comprehensive characterization of a human cancer cell phosphoproteome.</title>
        <authorList>
            <person name="Zhou H."/>
            <person name="Di Palma S."/>
            <person name="Preisinger C."/>
            <person name="Peng M."/>
            <person name="Polat A.N."/>
            <person name="Heck A.J."/>
            <person name="Mohammed S."/>
        </authorList>
    </citation>
    <scope>PHOSPHORYLATION [LARGE SCALE ANALYSIS] AT SER-434</scope>
    <scope>IDENTIFICATION BY MASS SPECTROMETRY [LARGE SCALE ANALYSIS]</scope>
    <source>
        <tissue>Cervix carcinoma</tissue>
    </source>
</reference>
<reference key="9">
    <citation type="journal article" date="2007" name="Nature">
        <title>Patterns of somatic mutation in human cancer genomes.</title>
        <authorList>
            <person name="Greenman C."/>
            <person name="Stephens P."/>
            <person name="Smith R."/>
            <person name="Dalgliesh G.L."/>
            <person name="Hunter C."/>
            <person name="Bignell G."/>
            <person name="Davies H."/>
            <person name="Teague J."/>
            <person name="Butler A."/>
            <person name="Stevens C."/>
            <person name="Edkins S."/>
            <person name="O'Meara S."/>
            <person name="Vastrik I."/>
            <person name="Schmidt E.E."/>
            <person name="Avis T."/>
            <person name="Barthorpe S."/>
            <person name="Bhamra G."/>
            <person name="Buck G."/>
            <person name="Choudhury B."/>
            <person name="Clements J."/>
            <person name="Cole J."/>
            <person name="Dicks E."/>
            <person name="Forbes S."/>
            <person name="Gray K."/>
            <person name="Halliday K."/>
            <person name="Harrison R."/>
            <person name="Hills K."/>
            <person name="Hinton J."/>
            <person name="Jenkinson A."/>
            <person name="Jones D."/>
            <person name="Menzies A."/>
            <person name="Mironenko T."/>
            <person name="Perry J."/>
            <person name="Raine K."/>
            <person name="Richardson D."/>
            <person name="Shepherd R."/>
            <person name="Small A."/>
            <person name="Tofts C."/>
            <person name="Varian J."/>
            <person name="Webb T."/>
            <person name="West S."/>
            <person name="Widaa S."/>
            <person name="Yates A."/>
            <person name="Cahill D.P."/>
            <person name="Louis D.N."/>
            <person name="Goldstraw P."/>
            <person name="Nicholson A.G."/>
            <person name="Brasseur F."/>
            <person name="Looijenga L."/>
            <person name="Weber B.L."/>
            <person name="Chiew Y.-E."/>
            <person name="DeFazio A."/>
            <person name="Greaves M.F."/>
            <person name="Green A.R."/>
            <person name="Campbell P."/>
            <person name="Birney E."/>
            <person name="Easton D.F."/>
            <person name="Chenevix-Trench G."/>
            <person name="Tan M.-H."/>
            <person name="Khoo S.K."/>
            <person name="Teh B.T."/>
            <person name="Yuen S.T."/>
            <person name="Leung S.Y."/>
            <person name="Wooster R."/>
            <person name="Futreal P.A."/>
            <person name="Stratton M.R."/>
        </authorList>
    </citation>
    <scope>VARIANTS [LARGE SCALE ANALYSIS] MET-38 AND PRO-371</scope>
</reference>
<protein>
    <recommendedName>
        <fullName>Mitogen-activated protein kinase 4</fullName>
        <shortName>MAP kinase 4</shortName>
        <shortName>MAPK 4</shortName>
        <ecNumber>2.7.11.24</ecNumber>
    </recommendedName>
    <alternativeName>
        <fullName>Extracellular signal-regulated kinase 4</fullName>
        <shortName>ERK-4</shortName>
    </alternativeName>
    <alternativeName>
        <fullName>MAP kinase isoform p63</fullName>
        <shortName>p63-MAPK</shortName>
    </alternativeName>
</protein>
<dbReference type="EC" id="2.7.11.24"/>
<dbReference type="EMBL" id="X59727">
    <property type="protein sequence ID" value="CAA42411.1"/>
    <property type="status" value="ALT_FRAME"/>
    <property type="molecule type" value="mRNA"/>
</dbReference>
<dbReference type="EMBL" id="AK295058">
    <property type="protein sequence ID" value="BAG58107.1"/>
    <property type="molecule type" value="mRNA"/>
</dbReference>
<dbReference type="EMBL" id="AC012433">
    <property type="status" value="NOT_ANNOTATED_CDS"/>
    <property type="molecule type" value="Genomic_DNA"/>
</dbReference>
<dbReference type="EMBL" id="AC090395">
    <property type="status" value="NOT_ANNOTATED_CDS"/>
    <property type="molecule type" value="Genomic_DNA"/>
</dbReference>
<dbReference type="EMBL" id="CH471096">
    <property type="protein sequence ID" value="EAW62976.1"/>
    <property type="molecule type" value="Genomic_DNA"/>
</dbReference>
<dbReference type="EMBL" id="CH471096">
    <property type="protein sequence ID" value="EAW62977.1"/>
    <property type="molecule type" value="Genomic_DNA"/>
</dbReference>
<dbReference type="EMBL" id="BC050299">
    <property type="protein sequence ID" value="AAH50299.1"/>
    <property type="molecule type" value="mRNA"/>
</dbReference>
<dbReference type="EMBL" id="BC117216">
    <property type="protein sequence ID" value="AAI17217.1"/>
    <property type="molecule type" value="mRNA"/>
</dbReference>
<dbReference type="CCDS" id="CCDS42437.1"/>
<dbReference type="PIR" id="S23429">
    <property type="entry name" value="S23429"/>
</dbReference>
<dbReference type="RefSeq" id="NP_001278968.1">
    <property type="nucleotide sequence ID" value="NM_001292039.1"/>
</dbReference>
<dbReference type="RefSeq" id="NP_001278969.1">
    <property type="nucleotide sequence ID" value="NM_001292040.1"/>
</dbReference>
<dbReference type="RefSeq" id="NP_002738.2">
    <property type="nucleotide sequence ID" value="NM_002747.4"/>
</dbReference>
<dbReference type="RefSeq" id="XP_005258356.1">
    <property type="nucleotide sequence ID" value="XM_005258299.4"/>
</dbReference>
<dbReference type="RefSeq" id="XP_011524376.1">
    <property type="nucleotide sequence ID" value="XM_011526074.3"/>
</dbReference>
<dbReference type="RefSeq" id="XP_011524377.1">
    <property type="nucleotide sequence ID" value="XM_011526075.4"/>
</dbReference>
<dbReference type="RefSeq" id="XP_011524378.1">
    <property type="nucleotide sequence ID" value="XM_011526076.3"/>
</dbReference>
<dbReference type="RefSeq" id="XP_016881328.1">
    <property type="nucleotide sequence ID" value="XM_017025839.3"/>
</dbReference>
<dbReference type="RefSeq" id="XP_047293581.1">
    <property type="nucleotide sequence ID" value="XM_047437625.1"/>
</dbReference>
<dbReference type="RefSeq" id="XP_054174781.1">
    <property type="nucleotide sequence ID" value="XM_054318806.1"/>
</dbReference>
<dbReference type="RefSeq" id="XP_054174782.1">
    <property type="nucleotide sequence ID" value="XM_054318807.1"/>
</dbReference>
<dbReference type="RefSeq" id="XP_054174783.1">
    <property type="nucleotide sequence ID" value="XM_054318808.1"/>
</dbReference>
<dbReference type="RefSeq" id="XP_054174784.1">
    <property type="nucleotide sequence ID" value="XM_054318809.1"/>
</dbReference>
<dbReference type="RefSeq" id="XP_054174785.1">
    <property type="nucleotide sequence ID" value="XM_054318810.1"/>
</dbReference>
<dbReference type="RefSeq" id="XP_054174786.1">
    <property type="nucleotide sequence ID" value="XM_054318811.1"/>
</dbReference>
<dbReference type="SMR" id="P31152"/>
<dbReference type="BioGRID" id="111582">
    <property type="interactions" value="71"/>
</dbReference>
<dbReference type="FunCoup" id="P31152">
    <property type="interactions" value="2221"/>
</dbReference>
<dbReference type="IntAct" id="P31152">
    <property type="interactions" value="63"/>
</dbReference>
<dbReference type="STRING" id="9606.ENSP00000383234"/>
<dbReference type="BindingDB" id="P31152"/>
<dbReference type="ChEMBL" id="CHEMBL5759"/>
<dbReference type="DrugBank" id="DB00945">
    <property type="generic name" value="Acetylsalicylic acid"/>
</dbReference>
<dbReference type="DrugBank" id="DB02587">
    <property type="generic name" value="Colforsin"/>
</dbReference>
<dbReference type="DrugBank" id="DB12010">
    <property type="generic name" value="Fostamatinib"/>
</dbReference>
<dbReference type="DrugBank" id="DB01017">
    <property type="generic name" value="Minocycline"/>
</dbReference>
<dbReference type="DrugCentral" id="P31152"/>
<dbReference type="iPTMnet" id="P31152"/>
<dbReference type="PhosphoSitePlus" id="P31152"/>
<dbReference type="SwissPalm" id="P31152"/>
<dbReference type="BioMuta" id="MAPK4"/>
<dbReference type="DMDM" id="215274102"/>
<dbReference type="CPTAC" id="CPTAC-883"/>
<dbReference type="CPTAC" id="CPTAC-884"/>
<dbReference type="jPOST" id="P31152"/>
<dbReference type="MassIVE" id="P31152"/>
<dbReference type="PaxDb" id="9606-ENSP00000383234"/>
<dbReference type="PeptideAtlas" id="P31152"/>
<dbReference type="ProteomicsDB" id="54762"/>
<dbReference type="Antibodypedia" id="2079">
    <property type="antibodies" value="397 antibodies from 34 providers"/>
</dbReference>
<dbReference type="DNASU" id="5596"/>
<dbReference type="Ensembl" id="ENST00000400384.7">
    <property type="protein sequence ID" value="ENSP00000383234.1"/>
    <property type="gene ID" value="ENSG00000141639.12"/>
</dbReference>
<dbReference type="GeneID" id="5596"/>
<dbReference type="KEGG" id="hsa:5596"/>
<dbReference type="MANE-Select" id="ENST00000400384.7">
    <property type="protein sequence ID" value="ENSP00000383234.1"/>
    <property type="RefSeq nucleotide sequence ID" value="NM_002747.4"/>
    <property type="RefSeq protein sequence ID" value="NP_002738.2"/>
</dbReference>
<dbReference type="UCSC" id="uc002lev.4">
    <property type="organism name" value="human"/>
</dbReference>
<dbReference type="AGR" id="HGNC:6878"/>
<dbReference type="CTD" id="5596"/>
<dbReference type="DisGeNET" id="5596"/>
<dbReference type="GeneCards" id="MAPK4"/>
<dbReference type="HGNC" id="HGNC:6878">
    <property type="gene designation" value="MAPK4"/>
</dbReference>
<dbReference type="HPA" id="ENSG00000141639">
    <property type="expression patterns" value="Tissue enhanced (brain, parathyroid gland)"/>
</dbReference>
<dbReference type="MIM" id="176949">
    <property type="type" value="gene"/>
</dbReference>
<dbReference type="neXtProt" id="NX_P31152"/>
<dbReference type="OpenTargets" id="ENSG00000141639"/>
<dbReference type="PharmGKB" id="PA30623"/>
<dbReference type="VEuPathDB" id="HostDB:ENSG00000141639"/>
<dbReference type="eggNOG" id="KOG0660">
    <property type="taxonomic scope" value="Eukaryota"/>
</dbReference>
<dbReference type="GeneTree" id="ENSGT00940000159850"/>
<dbReference type="HOGENOM" id="CLU_000288_181_15_1"/>
<dbReference type="InParanoid" id="P31152"/>
<dbReference type="OMA" id="LSHWKRT"/>
<dbReference type="OrthoDB" id="8806754at2759"/>
<dbReference type="PAN-GO" id="P31152">
    <property type="GO annotations" value="4 GO annotations based on evolutionary models"/>
</dbReference>
<dbReference type="PhylomeDB" id="P31152"/>
<dbReference type="TreeFam" id="TF105098"/>
<dbReference type="BRENDA" id="2.7.11.24">
    <property type="organism ID" value="2681"/>
</dbReference>
<dbReference type="PathwayCommons" id="P31152"/>
<dbReference type="Reactome" id="R-HSA-5687128">
    <property type="pathway name" value="MAPK6/MAPK4 signaling"/>
</dbReference>
<dbReference type="SignaLink" id="P31152"/>
<dbReference type="SIGNOR" id="P31152"/>
<dbReference type="BioGRID-ORCS" id="5596">
    <property type="hits" value="8 hits in 1153 CRISPR screens"/>
</dbReference>
<dbReference type="CD-CODE" id="91857CE7">
    <property type="entry name" value="Nucleolus"/>
</dbReference>
<dbReference type="ChiTaRS" id="MAPK4">
    <property type="organism name" value="human"/>
</dbReference>
<dbReference type="GeneWiki" id="MAPK4"/>
<dbReference type="GenomeRNAi" id="5596"/>
<dbReference type="Pharos" id="P31152">
    <property type="development level" value="Tbio"/>
</dbReference>
<dbReference type="PRO" id="PR:P31152"/>
<dbReference type="Proteomes" id="UP000005640">
    <property type="component" value="Chromosome 18"/>
</dbReference>
<dbReference type="RNAct" id="P31152">
    <property type="molecule type" value="protein"/>
</dbReference>
<dbReference type="Bgee" id="ENSG00000141639">
    <property type="expression patterns" value="Expressed in caudate nucleus and 89 other cell types or tissues"/>
</dbReference>
<dbReference type="ExpressionAtlas" id="P31152">
    <property type="expression patterns" value="baseline and differential"/>
</dbReference>
<dbReference type="GO" id="GO:0005737">
    <property type="term" value="C:cytoplasm"/>
    <property type="evidence" value="ECO:0000250"/>
    <property type="project" value="UniProtKB"/>
</dbReference>
<dbReference type="GO" id="GO:0005829">
    <property type="term" value="C:cytosol"/>
    <property type="evidence" value="ECO:0000304"/>
    <property type="project" value="Reactome"/>
</dbReference>
<dbReference type="GO" id="GO:0005654">
    <property type="term" value="C:nucleoplasm"/>
    <property type="evidence" value="ECO:0000304"/>
    <property type="project" value="Reactome"/>
</dbReference>
<dbReference type="GO" id="GO:0005634">
    <property type="term" value="C:nucleus"/>
    <property type="evidence" value="ECO:0000250"/>
    <property type="project" value="UniProtKB"/>
</dbReference>
<dbReference type="GO" id="GO:0005524">
    <property type="term" value="F:ATP binding"/>
    <property type="evidence" value="ECO:0007669"/>
    <property type="project" value="UniProtKB-KW"/>
</dbReference>
<dbReference type="GO" id="GO:0004707">
    <property type="term" value="F:MAP kinase activity"/>
    <property type="evidence" value="ECO:0000304"/>
    <property type="project" value="ProtInc"/>
</dbReference>
<dbReference type="GO" id="GO:0046982">
    <property type="term" value="F:protein heterodimerization activity"/>
    <property type="evidence" value="ECO:0007669"/>
    <property type="project" value="Ensembl"/>
</dbReference>
<dbReference type="GO" id="GO:0042803">
    <property type="term" value="F:protein homodimerization activity"/>
    <property type="evidence" value="ECO:0000250"/>
    <property type="project" value="UniProtKB"/>
</dbReference>
<dbReference type="GO" id="GO:0019901">
    <property type="term" value="F:protein kinase binding"/>
    <property type="evidence" value="ECO:0000250"/>
    <property type="project" value="UniProtKB"/>
</dbReference>
<dbReference type="GO" id="GO:0106310">
    <property type="term" value="F:protein serine kinase activity"/>
    <property type="evidence" value="ECO:0007669"/>
    <property type="project" value="RHEA"/>
</dbReference>
<dbReference type="GO" id="GO:0004674">
    <property type="term" value="F:protein serine/threonine kinase activity"/>
    <property type="evidence" value="ECO:0000318"/>
    <property type="project" value="GO_Central"/>
</dbReference>
<dbReference type="GO" id="GO:0035556">
    <property type="term" value="P:intracellular signal transduction"/>
    <property type="evidence" value="ECO:0000318"/>
    <property type="project" value="GO_Central"/>
</dbReference>
<dbReference type="GO" id="GO:0006468">
    <property type="term" value="P:protein phosphorylation"/>
    <property type="evidence" value="ECO:0000304"/>
    <property type="project" value="ProtInc"/>
</dbReference>
<dbReference type="CDD" id="cd07854">
    <property type="entry name" value="STKc_MAPK4_6"/>
    <property type="match status" value="1"/>
</dbReference>
<dbReference type="FunFam" id="3.30.200.20:FF:000281">
    <property type="entry name" value="Mitogen-activated protein kinase 4"/>
    <property type="match status" value="1"/>
</dbReference>
<dbReference type="FunFam" id="1.10.510.10:FF:000136">
    <property type="entry name" value="mitogen-activated protein kinase 6"/>
    <property type="match status" value="1"/>
</dbReference>
<dbReference type="Gene3D" id="3.30.200.20">
    <property type="entry name" value="Phosphorylase Kinase, domain 1"/>
    <property type="match status" value="1"/>
</dbReference>
<dbReference type="Gene3D" id="1.10.510.10">
    <property type="entry name" value="Transferase(Phosphotransferase) domain 1"/>
    <property type="match status" value="1"/>
</dbReference>
<dbReference type="InterPro" id="IPR011009">
    <property type="entry name" value="Kinase-like_dom_sf"/>
</dbReference>
<dbReference type="InterPro" id="IPR050117">
    <property type="entry name" value="MAP_kinase"/>
</dbReference>
<dbReference type="InterPro" id="IPR008350">
    <property type="entry name" value="MAPK_ERK3/4"/>
</dbReference>
<dbReference type="InterPro" id="IPR000719">
    <property type="entry name" value="Prot_kinase_dom"/>
</dbReference>
<dbReference type="InterPro" id="IPR017441">
    <property type="entry name" value="Protein_kinase_ATP_BS"/>
</dbReference>
<dbReference type="InterPro" id="IPR008271">
    <property type="entry name" value="Ser/Thr_kinase_AS"/>
</dbReference>
<dbReference type="PANTHER" id="PTHR24055">
    <property type="entry name" value="MITOGEN-ACTIVATED PROTEIN KINASE"/>
    <property type="match status" value="1"/>
</dbReference>
<dbReference type="Pfam" id="PF00069">
    <property type="entry name" value="Pkinase"/>
    <property type="match status" value="1"/>
</dbReference>
<dbReference type="PRINTS" id="PR01771">
    <property type="entry name" value="ERK3ERK4MAPK"/>
</dbReference>
<dbReference type="SMART" id="SM00220">
    <property type="entry name" value="S_TKc"/>
    <property type="match status" value="1"/>
</dbReference>
<dbReference type="SUPFAM" id="SSF56112">
    <property type="entry name" value="Protein kinase-like (PK-like)"/>
    <property type="match status" value="1"/>
</dbReference>
<dbReference type="PROSITE" id="PS00107">
    <property type="entry name" value="PROTEIN_KINASE_ATP"/>
    <property type="match status" value="1"/>
</dbReference>
<dbReference type="PROSITE" id="PS50011">
    <property type="entry name" value="PROTEIN_KINASE_DOM"/>
    <property type="match status" value="1"/>
</dbReference>
<dbReference type="PROSITE" id="PS00108">
    <property type="entry name" value="PROTEIN_KINASE_ST"/>
    <property type="match status" value="1"/>
</dbReference>
<gene>
    <name type="primary">MAPK4</name>
    <name type="synonym">ERK4</name>
    <name type="synonym">PRKM4</name>
</gene>
<feature type="chain" id="PRO_0000186254" description="Mitogen-activated protein kinase 4">
    <location>
        <begin position="1"/>
        <end position="587"/>
    </location>
</feature>
<feature type="domain" description="Protein kinase" evidence="2">
    <location>
        <begin position="20"/>
        <end position="312"/>
    </location>
</feature>
<feature type="region of interest" description="Disordered" evidence="4">
    <location>
        <begin position="373"/>
        <end position="413"/>
    </location>
</feature>
<feature type="region of interest" description="Disordered" evidence="4">
    <location>
        <begin position="499"/>
        <end position="534"/>
    </location>
</feature>
<feature type="short sequence motif" description="SEG motif">
    <location>
        <begin position="186"/>
        <end position="188"/>
    </location>
</feature>
<feature type="short sequence motif" description="FRIEDE motif">
    <location>
        <begin position="328"/>
        <end position="333"/>
    </location>
</feature>
<feature type="compositionally biased region" description="Basic and acidic residues" evidence="4">
    <location>
        <begin position="373"/>
        <end position="383"/>
    </location>
</feature>
<feature type="compositionally biased region" description="Basic and acidic residues" evidence="4">
    <location>
        <begin position="395"/>
        <end position="413"/>
    </location>
</feature>
<feature type="active site" description="Proton acceptor" evidence="2 3">
    <location>
        <position position="149"/>
    </location>
</feature>
<feature type="binding site" evidence="2">
    <location>
        <begin position="26"/>
        <end position="34"/>
    </location>
    <ligand>
        <name>ATP</name>
        <dbReference type="ChEBI" id="CHEBI:30616"/>
    </ligand>
</feature>
<feature type="binding site" evidence="2">
    <location>
        <position position="49"/>
    </location>
    <ligand>
        <name>ATP</name>
        <dbReference type="ChEBI" id="CHEBI:30616"/>
    </ligand>
</feature>
<feature type="modified residue" description="Phosphoserine; by PAK1, PAK2 and PAK3" evidence="7 9">
    <location>
        <position position="186"/>
    </location>
</feature>
<feature type="modified residue" description="Phosphoserine" evidence="10">
    <location>
        <position position="434"/>
    </location>
</feature>
<feature type="sequence variant" id="VAR_042254" description="In dbSNP:rs3752087." evidence="5 6">
    <original>V</original>
    <variation>M</variation>
    <location>
        <position position="38"/>
    </location>
</feature>
<feature type="sequence variant" id="VAR_042255" description="In dbSNP:rs3752089." evidence="6">
    <original>R</original>
    <variation>P</variation>
    <location>
        <position position="371"/>
    </location>
</feature>
<feature type="sequence conflict" description="In Ref. 5; AAH50299." evidence="8" ref="5">
    <original>A</original>
    <variation>S</variation>
    <location>
        <position position="220"/>
    </location>
</feature>
<name>MK04_HUMAN</name>